<protein>
    <recommendedName>
        <fullName>Deoxyuridine 5'-triphosphate nucleotidohydrolase</fullName>
        <shortName evidence="1">dUTPase</shortName>
        <ecNumber evidence="1">3.6.1.23</ecNumber>
    </recommendedName>
    <alternativeName>
        <fullName>dUTP pyrophosphatase</fullName>
    </alternativeName>
</protein>
<organism>
    <name type="scientific">African swine fever virus (isolate Tick/South Africa/Pretoriuskop Pr4/1996)</name>
    <name type="common">ASFV</name>
    <dbReference type="NCBI Taxonomy" id="561443"/>
    <lineage>
        <taxon>Viruses</taxon>
        <taxon>Varidnaviria</taxon>
        <taxon>Bamfordvirae</taxon>
        <taxon>Nucleocytoviricota</taxon>
        <taxon>Pokkesviricetes</taxon>
        <taxon>Asfuvirales</taxon>
        <taxon>Asfarviridae</taxon>
        <taxon>Asfivirus</taxon>
        <taxon>African swine fever virus</taxon>
    </lineage>
</organism>
<keyword id="KW-0244">Early protein</keyword>
<keyword id="KW-1035">Host cytoplasm</keyword>
<keyword id="KW-0378">Hydrolase</keyword>
<keyword id="KW-0460">Magnesium</keyword>
<keyword id="KW-0479">Metal-binding</keyword>
<keyword id="KW-0546">Nucleotide metabolism</keyword>
<keyword id="KW-0946">Virion</keyword>
<reference key="1">
    <citation type="submission" date="2003-03" db="EMBL/GenBank/DDBJ databases">
        <title>African swine fever virus genomes.</title>
        <authorList>
            <person name="Kutish G.F."/>
            <person name="Rock D.L."/>
        </authorList>
    </citation>
    <scope>NUCLEOTIDE SEQUENCE [GENOMIC DNA]</scope>
</reference>
<organismHost>
    <name type="scientific">Ornithodoros</name>
    <name type="common">relapsing fever ticks</name>
    <dbReference type="NCBI Taxonomy" id="6937"/>
</organismHost>
<organismHost>
    <name type="scientific">Phacochoerus aethiopicus</name>
    <name type="common">Warthog</name>
    <dbReference type="NCBI Taxonomy" id="85517"/>
</organismHost>
<organismHost>
    <name type="scientific">Phacochoerus africanus</name>
    <name type="common">Warthog</name>
    <dbReference type="NCBI Taxonomy" id="41426"/>
</organismHost>
<organismHost>
    <name type="scientific">Potamochoerus larvatus</name>
    <name type="common">Bushpig</name>
    <dbReference type="NCBI Taxonomy" id="273792"/>
</organismHost>
<organismHost>
    <name type="scientific">Sus scrofa</name>
    <name type="common">Pig</name>
    <dbReference type="NCBI Taxonomy" id="9823"/>
</organismHost>
<evidence type="ECO:0000250" key="1">
    <source>
        <dbReference type="UniProtKB" id="Q65199"/>
    </source>
</evidence>
<evidence type="ECO:0000305" key="2"/>
<name>DUTP_ASFP4</name>
<dbReference type="EC" id="3.6.1.23" evidence="1"/>
<dbReference type="EMBL" id="AY261363">
    <property type="status" value="NOT_ANNOTATED_CDS"/>
    <property type="molecule type" value="Genomic_DNA"/>
</dbReference>
<dbReference type="SMR" id="P0C9C3"/>
<dbReference type="Proteomes" id="UP000000859">
    <property type="component" value="Segment"/>
</dbReference>
<dbReference type="GO" id="GO:0030430">
    <property type="term" value="C:host cell cytoplasm"/>
    <property type="evidence" value="ECO:0007669"/>
    <property type="project" value="UniProtKB-SubCell"/>
</dbReference>
<dbReference type="GO" id="GO:0044423">
    <property type="term" value="C:virion component"/>
    <property type="evidence" value="ECO:0007669"/>
    <property type="project" value="UniProtKB-KW"/>
</dbReference>
<dbReference type="GO" id="GO:0004170">
    <property type="term" value="F:dUTP diphosphatase activity"/>
    <property type="evidence" value="ECO:0007669"/>
    <property type="project" value="UniProtKB-EC"/>
</dbReference>
<dbReference type="GO" id="GO:0046872">
    <property type="term" value="F:metal ion binding"/>
    <property type="evidence" value="ECO:0007669"/>
    <property type="project" value="UniProtKB-KW"/>
</dbReference>
<dbReference type="GO" id="GO:0009117">
    <property type="term" value="P:nucleotide metabolic process"/>
    <property type="evidence" value="ECO:0007669"/>
    <property type="project" value="UniProtKB-KW"/>
</dbReference>
<dbReference type="CDD" id="cd07557">
    <property type="entry name" value="trimeric_dUTPase"/>
    <property type="match status" value="1"/>
</dbReference>
<dbReference type="Gene3D" id="2.70.40.10">
    <property type="match status" value="1"/>
</dbReference>
<dbReference type="InterPro" id="IPR029054">
    <property type="entry name" value="dUTPase-like"/>
</dbReference>
<dbReference type="InterPro" id="IPR036157">
    <property type="entry name" value="dUTPase-like_sf"/>
</dbReference>
<dbReference type="InterPro" id="IPR033704">
    <property type="entry name" value="dUTPase_trimeric"/>
</dbReference>
<dbReference type="Pfam" id="PF00692">
    <property type="entry name" value="dUTPase"/>
    <property type="match status" value="1"/>
</dbReference>
<dbReference type="SUPFAM" id="SSF51283">
    <property type="entry name" value="dUTPase-like"/>
    <property type="match status" value="1"/>
</dbReference>
<gene>
    <name type="ordered locus">Pret-143</name>
</gene>
<proteinExistence type="inferred from homology"/>
<feature type="chain" id="PRO_0000373134" description="Deoxyuridine 5'-triphosphate nucleotidohydrolase">
    <location>
        <begin position="1"/>
        <end position="165"/>
    </location>
</feature>
<accession>P0C9C3</accession>
<sequence>MATNFFIQPITEEAEAYYPPSVITNKRKDLGVDVYCCSDLVLQPGLNIVRLHIKVACEHMGKKCGFKIMARSSMCTYERLLILANGIGLIDPGYVGELMLKIINLGDTPVQIWAKECLVQLVAQGDHVPDHINILKRNQIFPLFAPTPRGEGRFGSTGEAGIMRT</sequence>
<comment type="function">
    <text evidence="1">The viral dUTPase may play a role in lowering the dUTP concentration in natural infections to minimize misincorporation of deoxyuridine into the viral DNA and ensure the fidelity of genome replication.</text>
</comment>
<comment type="catalytic activity">
    <reaction>
        <text>dUTP + H2O = dUMP + diphosphate + H(+)</text>
        <dbReference type="Rhea" id="RHEA:10248"/>
        <dbReference type="ChEBI" id="CHEBI:15377"/>
        <dbReference type="ChEBI" id="CHEBI:15378"/>
        <dbReference type="ChEBI" id="CHEBI:33019"/>
        <dbReference type="ChEBI" id="CHEBI:61555"/>
        <dbReference type="ChEBI" id="CHEBI:246422"/>
        <dbReference type="EC" id="3.6.1.23"/>
    </reaction>
</comment>
<comment type="cofactor">
    <cofactor evidence="1">
        <name>Mg(2+)</name>
        <dbReference type="ChEBI" id="CHEBI:18420"/>
    </cofactor>
</comment>
<comment type="subunit">
    <text evidence="1">Homotrimer.</text>
</comment>
<comment type="subcellular location">
    <subcellularLocation>
        <location evidence="1">Host cytoplasm</location>
    </subcellularLocation>
    <subcellularLocation>
        <location evidence="1">Virion</location>
    </subcellularLocation>
    <text evidence="1">Found in association with viral nucleoid.</text>
</comment>
<comment type="induction">
    <text evidence="2">Expressed in the early phase of the viral replicative cycle.</text>
</comment>
<comment type="similarity">
    <text evidence="2">Belongs to the dUTPase family.</text>
</comment>